<dbReference type="EMBL" id="AM286280">
    <property type="protein sequence ID" value="CAL08353.1"/>
    <property type="molecule type" value="Genomic_DNA"/>
</dbReference>
<dbReference type="RefSeq" id="WP_003021592.1">
    <property type="nucleotide sequence ID" value="NC_008245.1"/>
</dbReference>
<dbReference type="SMR" id="Q14JA8"/>
<dbReference type="KEGG" id="ftf:FTF0337"/>
<dbReference type="HOGENOM" id="CLU_061015_2_1_6"/>
<dbReference type="GO" id="GO:1990904">
    <property type="term" value="C:ribonucleoprotein complex"/>
    <property type="evidence" value="ECO:0007669"/>
    <property type="project" value="UniProtKB-KW"/>
</dbReference>
<dbReference type="GO" id="GO:0005840">
    <property type="term" value="C:ribosome"/>
    <property type="evidence" value="ECO:0007669"/>
    <property type="project" value="UniProtKB-KW"/>
</dbReference>
<dbReference type="GO" id="GO:0019843">
    <property type="term" value="F:rRNA binding"/>
    <property type="evidence" value="ECO:0007669"/>
    <property type="project" value="UniProtKB-UniRule"/>
</dbReference>
<dbReference type="GO" id="GO:0003735">
    <property type="term" value="F:structural constituent of ribosome"/>
    <property type="evidence" value="ECO:0007669"/>
    <property type="project" value="InterPro"/>
</dbReference>
<dbReference type="GO" id="GO:0000049">
    <property type="term" value="F:tRNA binding"/>
    <property type="evidence" value="ECO:0007669"/>
    <property type="project" value="UniProtKB-UniRule"/>
</dbReference>
<dbReference type="GO" id="GO:0006412">
    <property type="term" value="P:translation"/>
    <property type="evidence" value="ECO:0007669"/>
    <property type="project" value="UniProtKB-UniRule"/>
</dbReference>
<dbReference type="FunFam" id="3.30.1440.10:FF:000001">
    <property type="entry name" value="50S ribosomal protein L5"/>
    <property type="match status" value="1"/>
</dbReference>
<dbReference type="Gene3D" id="3.30.1440.10">
    <property type="match status" value="1"/>
</dbReference>
<dbReference type="HAMAP" id="MF_01333_B">
    <property type="entry name" value="Ribosomal_uL5_B"/>
    <property type="match status" value="1"/>
</dbReference>
<dbReference type="InterPro" id="IPR002132">
    <property type="entry name" value="Ribosomal_uL5"/>
</dbReference>
<dbReference type="InterPro" id="IPR020930">
    <property type="entry name" value="Ribosomal_uL5_bac-type"/>
</dbReference>
<dbReference type="InterPro" id="IPR031309">
    <property type="entry name" value="Ribosomal_uL5_C"/>
</dbReference>
<dbReference type="InterPro" id="IPR020929">
    <property type="entry name" value="Ribosomal_uL5_CS"/>
</dbReference>
<dbReference type="InterPro" id="IPR022803">
    <property type="entry name" value="Ribosomal_uL5_dom_sf"/>
</dbReference>
<dbReference type="InterPro" id="IPR031310">
    <property type="entry name" value="Ribosomal_uL5_N"/>
</dbReference>
<dbReference type="NCBIfam" id="NF000585">
    <property type="entry name" value="PRK00010.1"/>
    <property type="match status" value="1"/>
</dbReference>
<dbReference type="PANTHER" id="PTHR11994">
    <property type="entry name" value="60S RIBOSOMAL PROTEIN L11-RELATED"/>
    <property type="match status" value="1"/>
</dbReference>
<dbReference type="Pfam" id="PF00281">
    <property type="entry name" value="Ribosomal_L5"/>
    <property type="match status" value="1"/>
</dbReference>
<dbReference type="Pfam" id="PF00673">
    <property type="entry name" value="Ribosomal_L5_C"/>
    <property type="match status" value="1"/>
</dbReference>
<dbReference type="PIRSF" id="PIRSF002161">
    <property type="entry name" value="Ribosomal_L5"/>
    <property type="match status" value="1"/>
</dbReference>
<dbReference type="SUPFAM" id="SSF55282">
    <property type="entry name" value="RL5-like"/>
    <property type="match status" value="1"/>
</dbReference>
<dbReference type="PROSITE" id="PS00358">
    <property type="entry name" value="RIBOSOMAL_L5"/>
    <property type="match status" value="1"/>
</dbReference>
<organism>
    <name type="scientific">Francisella tularensis subsp. tularensis (strain FSC 198)</name>
    <dbReference type="NCBI Taxonomy" id="393115"/>
    <lineage>
        <taxon>Bacteria</taxon>
        <taxon>Pseudomonadati</taxon>
        <taxon>Pseudomonadota</taxon>
        <taxon>Gammaproteobacteria</taxon>
        <taxon>Thiotrichales</taxon>
        <taxon>Francisellaceae</taxon>
        <taxon>Francisella</taxon>
    </lineage>
</organism>
<name>RL5_FRAT1</name>
<reference key="1">
    <citation type="journal article" date="2007" name="PLoS ONE">
        <title>Genome sequencing shows that European isolates of Francisella tularensis subspecies tularensis are almost identical to US laboratory strain Schu S4.</title>
        <authorList>
            <person name="Chaudhuri R.R."/>
            <person name="Ren C.-P."/>
            <person name="Desmond L."/>
            <person name="Vincent G.A."/>
            <person name="Silman N.J."/>
            <person name="Brehm J.K."/>
            <person name="Elmore M.J."/>
            <person name="Hudson M.J."/>
            <person name="Forsman M."/>
            <person name="Isherwood K.E."/>
            <person name="Gurycova D."/>
            <person name="Minton N.P."/>
            <person name="Titball R.W."/>
            <person name="Pallen M.J."/>
            <person name="Vipond R."/>
        </authorList>
    </citation>
    <scope>NUCLEOTIDE SEQUENCE [LARGE SCALE GENOMIC DNA]</scope>
    <source>
        <strain>FSC 198</strain>
    </source>
</reference>
<protein>
    <recommendedName>
        <fullName evidence="1">Large ribosomal subunit protein uL5</fullName>
    </recommendedName>
    <alternativeName>
        <fullName evidence="2">50S ribosomal protein L5</fullName>
    </alternativeName>
</protein>
<sequence>MARLKDYYQKELVAKLKTELGLDNIMEVPTIKKITLNMGVGDAAKDKKIMTFALNDLTAIAGQKPVVTKSKKSIAGFKIRDGWPIGAKVTLRGDRMYEFLDRLITIAIPRIRDFRGLSAKSFDGRGNYSLGMREQISFPEIDYDKVDSIRGLDISITTTAKNDDQGRALLKAFGFPFKS</sequence>
<feature type="chain" id="PRO_1000052736" description="Large ribosomal subunit protein uL5">
    <location>
        <begin position="1"/>
        <end position="179"/>
    </location>
</feature>
<proteinExistence type="inferred from homology"/>
<keyword id="KW-0687">Ribonucleoprotein</keyword>
<keyword id="KW-0689">Ribosomal protein</keyword>
<keyword id="KW-0694">RNA-binding</keyword>
<keyword id="KW-0699">rRNA-binding</keyword>
<keyword id="KW-0820">tRNA-binding</keyword>
<gene>
    <name evidence="1" type="primary">rplE</name>
    <name type="ordered locus">FTF0337</name>
</gene>
<comment type="function">
    <text evidence="1">This is one of the proteins that bind and probably mediate the attachment of the 5S RNA into the large ribosomal subunit, where it forms part of the central protuberance. In the 70S ribosome it contacts protein S13 of the 30S subunit (bridge B1b), connecting the 2 subunits; this bridge is implicated in subunit movement. Contacts the P site tRNA; the 5S rRNA and some of its associated proteins might help stabilize positioning of ribosome-bound tRNAs.</text>
</comment>
<comment type="subunit">
    <text evidence="1">Part of the 50S ribosomal subunit; part of the 5S rRNA/L5/L18/L25 subcomplex. Contacts the 5S rRNA and the P site tRNA. Forms a bridge to the 30S subunit in the 70S ribosome.</text>
</comment>
<comment type="similarity">
    <text evidence="1">Belongs to the universal ribosomal protein uL5 family.</text>
</comment>
<accession>Q14JA8</accession>
<evidence type="ECO:0000255" key="1">
    <source>
        <dbReference type="HAMAP-Rule" id="MF_01333"/>
    </source>
</evidence>
<evidence type="ECO:0000305" key="2"/>